<organism>
    <name type="scientific">Mycolicibacterium vanbaalenii (strain DSM 7251 / JCM 13017 / BCRC 16820 / KCTC 9966 / NRRL B-24157 / PYR-1)</name>
    <name type="common">Mycobacterium vanbaalenii</name>
    <dbReference type="NCBI Taxonomy" id="350058"/>
    <lineage>
        <taxon>Bacteria</taxon>
        <taxon>Bacillati</taxon>
        <taxon>Actinomycetota</taxon>
        <taxon>Actinomycetes</taxon>
        <taxon>Mycobacteriales</taxon>
        <taxon>Mycobacteriaceae</taxon>
        <taxon>Mycolicibacterium</taxon>
    </lineage>
</organism>
<sequence length="362" mass="39652">MTTPLTFDNIRRAPKALLHDHLDGGLRPSTVLELAEQYGYEDLPAHDADGLATFFRTAAHSGSLVRYLEPFAHTVGVMQNPDALHRVARECVEDLAADNVVYAEVRFAPELHIDGGLSLDAVVDAVLAGFADGEKAAAADGRAITVRCLVTAMRHAARSREIAELAIRFRDKGVVGFDIAGAEAGYPPSRHLDAFEYMRSNNARFTIHAGEAFGLPSIHEAIAFCGADRLGHGVRIVDDIEIDADGNAKLGRLASLLRDKRIPFEMCPSSNVQTGAVASIAEHPFDRLARLRFRVTVNTDNRLMSDTSMSMEMLRLVEAFGYGWSDLERFTINAMKSAFIAFDERLAIIDEVIKPRYAVLVG</sequence>
<evidence type="ECO:0000255" key="1">
    <source>
        <dbReference type="HAMAP-Rule" id="MF_00540"/>
    </source>
</evidence>
<proteinExistence type="inferred from homology"/>
<name>ADD_MYCVP</name>
<accession>A1T5H1</accession>
<keyword id="KW-0378">Hydrolase</keyword>
<keyword id="KW-0479">Metal-binding</keyword>
<keyword id="KW-0546">Nucleotide metabolism</keyword>
<keyword id="KW-0862">Zinc</keyword>
<dbReference type="EC" id="3.5.4.4" evidence="1"/>
<dbReference type="EMBL" id="CP000511">
    <property type="protein sequence ID" value="ABM12421.1"/>
    <property type="molecule type" value="Genomic_DNA"/>
</dbReference>
<dbReference type="RefSeq" id="WP_011778846.1">
    <property type="nucleotide sequence ID" value="NZ_JACKSD010000278.1"/>
</dbReference>
<dbReference type="SMR" id="A1T5H1"/>
<dbReference type="STRING" id="350058.Mvan_1592"/>
<dbReference type="KEGG" id="mva:Mvan_1592"/>
<dbReference type="eggNOG" id="COG1816">
    <property type="taxonomic scope" value="Bacteria"/>
</dbReference>
<dbReference type="HOGENOM" id="CLU_039228_0_0_11"/>
<dbReference type="Proteomes" id="UP000009159">
    <property type="component" value="Chromosome"/>
</dbReference>
<dbReference type="GO" id="GO:0005829">
    <property type="term" value="C:cytosol"/>
    <property type="evidence" value="ECO:0007669"/>
    <property type="project" value="TreeGrafter"/>
</dbReference>
<dbReference type="GO" id="GO:0046936">
    <property type="term" value="F:2'-deoxyadenosine deaminase activity"/>
    <property type="evidence" value="ECO:0007669"/>
    <property type="project" value="RHEA"/>
</dbReference>
<dbReference type="GO" id="GO:0004000">
    <property type="term" value="F:adenosine deaminase activity"/>
    <property type="evidence" value="ECO:0007669"/>
    <property type="project" value="UniProtKB-UniRule"/>
</dbReference>
<dbReference type="GO" id="GO:0008270">
    <property type="term" value="F:zinc ion binding"/>
    <property type="evidence" value="ECO:0007669"/>
    <property type="project" value="UniProtKB-UniRule"/>
</dbReference>
<dbReference type="GO" id="GO:0006154">
    <property type="term" value="P:adenosine catabolic process"/>
    <property type="evidence" value="ECO:0007669"/>
    <property type="project" value="TreeGrafter"/>
</dbReference>
<dbReference type="GO" id="GO:0043103">
    <property type="term" value="P:hypoxanthine salvage"/>
    <property type="evidence" value="ECO:0007669"/>
    <property type="project" value="TreeGrafter"/>
</dbReference>
<dbReference type="GO" id="GO:0046103">
    <property type="term" value="P:inosine biosynthetic process"/>
    <property type="evidence" value="ECO:0007669"/>
    <property type="project" value="TreeGrafter"/>
</dbReference>
<dbReference type="GO" id="GO:0009117">
    <property type="term" value="P:nucleotide metabolic process"/>
    <property type="evidence" value="ECO:0007669"/>
    <property type="project" value="UniProtKB-KW"/>
</dbReference>
<dbReference type="GO" id="GO:0009168">
    <property type="term" value="P:purine ribonucleoside monophosphate biosynthetic process"/>
    <property type="evidence" value="ECO:0007669"/>
    <property type="project" value="UniProtKB-UniRule"/>
</dbReference>
<dbReference type="FunFam" id="3.20.20.140:FF:000020">
    <property type="entry name" value="Adenosine deaminase"/>
    <property type="match status" value="1"/>
</dbReference>
<dbReference type="Gene3D" id="3.20.20.140">
    <property type="entry name" value="Metal-dependent hydrolases"/>
    <property type="match status" value="1"/>
</dbReference>
<dbReference type="HAMAP" id="MF_00540">
    <property type="entry name" value="A_deaminase"/>
    <property type="match status" value="1"/>
</dbReference>
<dbReference type="InterPro" id="IPR028893">
    <property type="entry name" value="A_deaminase"/>
</dbReference>
<dbReference type="InterPro" id="IPR001365">
    <property type="entry name" value="A_deaminase_dom"/>
</dbReference>
<dbReference type="InterPro" id="IPR006330">
    <property type="entry name" value="Ado/ade_deaminase"/>
</dbReference>
<dbReference type="InterPro" id="IPR032466">
    <property type="entry name" value="Metal_Hydrolase"/>
</dbReference>
<dbReference type="NCBIfam" id="TIGR01430">
    <property type="entry name" value="aden_deam"/>
    <property type="match status" value="1"/>
</dbReference>
<dbReference type="NCBIfam" id="NF006847">
    <property type="entry name" value="PRK09358.1-2"/>
    <property type="match status" value="1"/>
</dbReference>
<dbReference type="PANTHER" id="PTHR11409">
    <property type="entry name" value="ADENOSINE DEAMINASE"/>
    <property type="match status" value="1"/>
</dbReference>
<dbReference type="PANTHER" id="PTHR11409:SF43">
    <property type="entry name" value="ADENOSINE DEAMINASE"/>
    <property type="match status" value="1"/>
</dbReference>
<dbReference type="Pfam" id="PF00962">
    <property type="entry name" value="A_deaminase"/>
    <property type="match status" value="1"/>
</dbReference>
<dbReference type="SUPFAM" id="SSF51556">
    <property type="entry name" value="Metallo-dependent hydrolases"/>
    <property type="match status" value="1"/>
</dbReference>
<feature type="chain" id="PRO_1000017675" description="Adenosine deaminase">
    <location>
        <begin position="1"/>
        <end position="362"/>
    </location>
</feature>
<feature type="active site" description="Proton donor" evidence="1">
    <location>
        <position position="211"/>
    </location>
</feature>
<feature type="binding site" evidence="1">
    <location>
        <position position="19"/>
    </location>
    <ligand>
        <name>Zn(2+)</name>
        <dbReference type="ChEBI" id="CHEBI:29105"/>
        <note>catalytic</note>
    </ligand>
</feature>
<feature type="binding site" evidence="1">
    <location>
        <position position="21"/>
    </location>
    <ligand>
        <name>substrate</name>
    </ligand>
</feature>
<feature type="binding site" evidence="1">
    <location>
        <position position="21"/>
    </location>
    <ligand>
        <name>Zn(2+)</name>
        <dbReference type="ChEBI" id="CHEBI:29105"/>
        <note>catalytic</note>
    </ligand>
</feature>
<feature type="binding site" evidence="1">
    <location>
        <position position="23"/>
    </location>
    <ligand>
        <name>substrate</name>
    </ligand>
</feature>
<feature type="binding site" evidence="1">
    <location>
        <position position="181"/>
    </location>
    <ligand>
        <name>substrate</name>
    </ligand>
</feature>
<feature type="binding site" evidence="1">
    <location>
        <position position="208"/>
    </location>
    <ligand>
        <name>Zn(2+)</name>
        <dbReference type="ChEBI" id="CHEBI:29105"/>
        <note>catalytic</note>
    </ligand>
</feature>
<feature type="binding site" evidence="1">
    <location>
        <position position="300"/>
    </location>
    <ligand>
        <name>Zn(2+)</name>
        <dbReference type="ChEBI" id="CHEBI:29105"/>
        <note>catalytic</note>
    </ligand>
</feature>
<feature type="site" description="Important for catalytic activity" evidence="1">
    <location>
        <position position="232"/>
    </location>
</feature>
<gene>
    <name evidence="1" type="primary">add</name>
    <name type="ordered locus">Mvan_1592</name>
</gene>
<reference key="1">
    <citation type="submission" date="2006-12" db="EMBL/GenBank/DDBJ databases">
        <title>Complete sequence of Mycobacterium vanbaalenii PYR-1.</title>
        <authorList>
            <consortium name="US DOE Joint Genome Institute"/>
            <person name="Copeland A."/>
            <person name="Lucas S."/>
            <person name="Lapidus A."/>
            <person name="Barry K."/>
            <person name="Detter J.C."/>
            <person name="Glavina del Rio T."/>
            <person name="Hammon N."/>
            <person name="Israni S."/>
            <person name="Dalin E."/>
            <person name="Tice H."/>
            <person name="Pitluck S."/>
            <person name="Singan V."/>
            <person name="Schmutz J."/>
            <person name="Larimer F."/>
            <person name="Land M."/>
            <person name="Hauser L."/>
            <person name="Kyrpides N."/>
            <person name="Anderson I.J."/>
            <person name="Miller C."/>
            <person name="Richardson P."/>
        </authorList>
    </citation>
    <scope>NUCLEOTIDE SEQUENCE [LARGE SCALE GENOMIC DNA]</scope>
    <source>
        <strain>DSM 7251 / JCM 13017 / BCRC 16820 / KCTC 9966 / NRRL B-24157 / PYR-1</strain>
    </source>
</reference>
<comment type="function">
    <text evidence="1">Catalyzes the hydrolytic deamination of adenosine and 2-deoxyadenosine.</text>
</comment>
<comment type="catalytic activity">
    <reaction evidence="1">
        <text>adenosine + H2O + H(+) = inosine + NH4(+)</text>
        <dbReference type="Rhea" id="RHEA:24408"/>
        <dbReference type="ChEBI" id="CHEBI:15377"/>
        <dbReference type="ChEBI" id="CHEBI:15378"/>
        <dbReference type="ChEBI" id="CHEBI:16335"/>
        <dbReference type="ChEBI" id="CHEBI:17596"/>
        <dbReference type="ChEBI" id="CHEBI:28938"/>
        <dbReference type="EC" id="3.5.4.4"/>
    </reaction>
    <physiologicalReaction direction="left-to-right" evidence="1">
        <dbReference type="Rhea" id="RHEA:24409"/>
    </physiologicalReaction>
</comment>
<comment type="catalytic activity">
    <reaction evidence="1">
        <text>2'-deoxyadenosine + H2O + H(+) = 2'-deoxyinosine + NH4(+)</text>
        <dbReference type="Rhea" id="RHEA:28190"/>
        <dbReference type="ChEBI" id="CHEBI:15377"/>
        <dbReference type="ChEBI" id="CHEBI:15378"/>
        <dbReference type="ChEBI" id="CHEBI:17256"/>
        <dbReference type="ChEBI" id="CHEBI:28938"/>
        <dbReference type="ChEBI" id="CHEBI:28997"/>
        <dbReference type="EC" id="3.5.4.4"/>
    </reaction>
    <physiologicalReaction direction="left-to-right" evidence="1">
        <dbReference type="Rhea" id="RHEA:28191"/>
    </physiologicalReaction>
</comment>
<comment type="cofactor">
    <cofactor evidence="1">
        <name>Zn(2+)</name>
        <dbReference type="ChEBI" id="CHEBI:29105"/>
    </cofactor>
    <text evidence="1">Binds 1 zinc ion per subunit.</text>
</comment>
<comment type="similarity">
    <text evidence="1">Belongs to the metallo-dependent hydrolases superfamily. Adenosine and AMP deaminases family. Adenosine deaminase subfamily.</text>
</comment>
<protein>
    <recommendedName>
        <fullName evidence="1">Adenosine deaminase</fullName>
        <ecNumber evidence="1">3.5.4.4</ecNumber>
    </recommendedName>
    <alternativeName>
        <fullName evidence="1">Adenosine aminohydrolase</fullName>
    </alternativeName>
</protein>